<feature type="chain" id="PRO_1000021164" description="4-hydroxy-3-methylbut-2-enyl diphosphate reductase">
    <location>
        <begin position="1"/>
        <end position="315"/>
    </location>
</feature>
<feature type="active site" description="Proton donor" evidence="1">
    <location>
        <position position="126"/>
    </location>
</feature>
<feature type="binding site" evidence="1">
    <location>
        <position position="12"/>
    </location>
    <ligand>
        <name>[4Fe-4S] cluster</name>
        <dbReference type="ChEBI" id="CHEBI:49883"/>
    </ligand>
</feature>
<feature type="binding site" evidence="1">
    <location>
        <position position="41"/>
    </location>
    <ligand>
        <name>(2E)-4-hydroxy-3-methylbut-2-enyl diphosphate</name>
        <dbReference type="ChEBI" id="CHEBI:128753"/>
    </ligand>
</feature>
<feature type="binding site" evidence="1">
    <location>
        <position position="41"/>
    </location>
    <ligand>
        <name>dimethylallyl diphosphate</name>
        <dbReference type="ChEBI" id="CHEBI:57623"/>
    </ligand>
</feature>
<feature type="binding site" evidence="1">
    <location>
        <position position="41"/>
    </location>
    <ligand>
        <name>isopentenyl diphosphate</name>
        <dbReference type="ChEBI" id="CHEBI:128769"/>
    </ligand>
</feature>
<feature type="binding site" evidence="1">
    <location>
        <position position="74"/>
    </location>
    <ligand>
        <name>(2E)-4-hydroxy-3-methylbut-2-enyl diphosphate</name>
        <dbReference type="ChEBI" id="CHEBI:128753"/>
    </ligand>
</feature>
<feature type="binding site" evidence="1">
    <location>
        <position position="74"/>
    </location>
    <ligand>
        <name>dimethylallyl diphosphate</name>
        <dbReference type="ChEBI" id="CHEBI:57623"/>
    </ligand>
</feature>
<feature type="binding site" evidence="1">
    <location>
        <position position="74"/>
    </location>
    <ligand>
        <name>isopentenyl diphosphate</name>
        <dbReference type="ChEBI" id="CHEBI:128769"/>
    </ligand>
</feature>
<feature type="binding site" evidence="1">
    <location>
        <position position="96"/>
    </location>
    <ligand>
        <name>[4Fe-4S] cluster</name>
        <dbReference type="ChEBI" id="CHEBI:49883"/>
    </ligand>
</feature>
<feature type="binding site" evidence="1">
    <location>
        <position position="124"/>
    </location>
    <ligand>
        <name>(2E)-4-hydroxy-3-methylbut-2-enyl diphosphate</name>
        <dbReference type="ChEBI" id="CHEBI:128753"/>
    </ligand>
</feature>
<feature type="binding site" evidence="1">
    <location>
        <position position="124"/>
    </location>
    <ligand>
        <name>dimethylallyl diphosphate</name>
        <dbReference type="ChEBI" id="CHEBI:57623"/>
    </ligand>
</feature>
<feature type="binding site" evidence="1">
    <location>
        <position position="124"/>
    </location>
    <ligand>
        <name>isopentenyl diphosphate</name>
        <dbReference type="ChEBI" id="CHEBI:128769"/>
    </ligand>
</feature>
<feature type="binding site" evidence="1">
    <location>
        <position position="168"/>
    </location>
    <ligand>
        <name>(2E)-4-hydroxy-3-methylbut-2-enyl diphosphate</name>
        <dbReference type="ChEBI" id="CHEBI:128753"/>
    </ligand>
</feature>
<feature type="binding site" evidence="1">
    <location>
        <position position="198"/>
    </location>
    <ligand>
        <name>[4Fe-4S] cluster</name>
        <dbReference type="ChEBI" id="CHEBI:49883"/>
    </ligand>
</feature>
<feature type="binding site" evidence="1">
    <location>
        <position position="226"/>
    </location>
    <ligand>
        <name>(2E)-4-hydroxy-3-methylbut-2-enyl diphosphate</name>
        <dbReference type="ChEBI" id="CHEBI:128753"/>
    </ligand>
</feature>
<feature type="binding site" evidence="1">
    <location>
        <position position="226"/>
    </location>
    <ligand>
        <name>dimethylallyl diphosphate</name>
        <dbReference type="ChEBI" id="CHEBI:57623"/>
    </ligand>
</feature>
<feature type="binding site" evidence="1">
    <location>
        <position position="226"/>
    </location>
    <ligand>
        <name>isopentenyl diphosphate</name>
        <dbReference type="ChEBI" id="CHEBI:128769"/>
    </ligand>
</feature>
<feature type="binding site" evidence="1">
    <location>
        <position position="227"/>
    </location>
    <ligand>
        <name>(2E)-4-hydroxy-3-methylbut-2-enyl diphosphate</name>
        <dbReference type="ChEBI" id="CHEBI:128753"/>
    </ligand>
</feature>
<feature type="binding site" evidence="1">
    <location>
        <position position="227"/>
    </location>
    <ligand>
        <name>dimethylallyl diphosphate</name>
        <dbReference type="ChEBI" id="CHEBI:57623"/>
    </ligand>
</feature>
<feature type="binding site" evidence="1">
    <location>
        <position position="227"/>
    </location>
    <ligand>
        <name>isopentenyl diphosphate</name>
        <dbReference type="ChEBI" id="CHEBI:128769"/>
    </ligand>
</feature>
<feature type="binding site" evidence="1">
    <location>
        <position position="228"/>
    </location>
    <ligand>
        <name>(2E)-4-hydroxy-3-methylbut-2-enyl diphosphate</name>
        <dbReference type="ChEBI" id="CHEBI:128753"/>
    </ligand>
</feature>
<feature type="binding site" evidence="1">
    <location>
        <position position="228"/>
    </location>
    <ligand>
        <name>dimethylallyl diphosphate</name>
        <dbReference type="ChEBI" id="CHEBI:57623"/>
    </ligand>
</feature>
<feature type="binding site" evidence="1">
    <location>
        <position position="228"/>
    </location>
    <ligand>
        <name>isopentenyl diphosphate</name>
        <dbReference type="ChEBI" id="CHEBI:128769"/>
    </ligand>
</feature>
<feature type="binding site" evidence="1">
    <location>
        <position position="270"/>
    </location>
    <ligand>
        <name>(2E)-4-hydroxy-3-methylbut-2-enyl diphosphate</name>
        <dbReference type="ChEBI" id="CHEBI:128753"/>
    </ligand>
</feature>
<feature type="binding site" evidence="1">
    <location>
        <position position="270"/>
    </location>
    <ligand>
        <name>dimethylallyl diphosphate</name>
        <dbReference type="ChEBI" id="CHEBI:57623"/>
    </ligand>
</feature>
<feature type="binding site" evidence="1">
    <location>
        <position position="270"/>
    </location>
    <ligand>
        <name>isopentenyl diphosphate</name>
        <dbReference type="ChEBI" id="CHEBI:128769"/>
    </ligand>
</feature>
<proteinExistence type="inferred from homology"/>
<name>ISPH_PSEP1</name>
<dbReference type="EC" id="1.17.7.4" evidence="1"/>
<dbReference type="EMBL" id="CP000712">
    <property type="protein sequence ID" value="ABQ76815.1"/>
    <property type="molecule type" value="Genomic_DNA"/>
</dbReference>
<dbReference type="SMR" id="A5VY55"/>
<dbReference type="KEGG" id="ppf:Pput_0647"/>
<dbReference type="eggNOG" id="COG0761">
    <property type="taxonomic scope" value="Bacteria"/>
</dbReference>
<dbReference type="HOGENOM" id="CLU_027486_1_1_6"/>
<dbReference type="UniPathway" id="UPA00056">
    <property type="reaction ID" value="UER00097"/>
</dbReference>
<dbReference type="UniPathway" id="UPA00059">
    <property type="reaction ID" value="UER00105"/>
</dbReference>
<dbReference type="GO" id="GO:0051539">
    <property type="term" value="F:4 iron, 4 sulfur cluster binding"/>
    <property type="evidence" value="ECO:0007669"/>
    <property type="project" value="UniProtKB-UniRule"/>
</dbReference>
<dbReference type="GO" id="GO:0051745">
    <property type="term" value="F:4-hydroxy-3-methylbut-2-enyl diphosphate reductase activity"/>
    <property type="evidence" value="ECO:0007669"/>
    <property type="project" value="UniProtKB-UniRule"/>
</dbReference>
<dbReference type="GO" id="GO:0046872">
    <property type="term" value="F:metal ion binding"/>
    <property type="evidence" value="ECO:0007669"/>
    <property type="project" value="UniProtKB-KW"/>
</dbReference>
<dbReference type="GO" id="GO:0050992">
    <property type="term" value="P:dimethylallyl diphosphate biosynthetic process"/>
    <property type="evidence" value="ECO:0007669"/>
    <property type="project" value="UniProtKB-UniRule"/>
</dbReference>
<dbReference type="GO" id="GO:0019288">
    <property type="term" value="P:isopentenyl diphosphate biosynthetic process, methylerythritol 4-phosphate pathway"/>
    <property type="evidence" value="ECO:0007669"/>
    <property type="project" value="UniProtKB-UniRule"/>
</dbReference>
<dbReference type="GO" id="GO:0016114">
    <property type="term" value="P:terpenoid biosynthetic process"/>
    <property type="evidence" value="ECO:0007669"/>
    <property type="project" value="UniProtKB-UniRule"/>
</dbReference>
<dbReference type="CDD" id="cd13944">
    <property type="entry name" value="lytB_ispH"/>
    <property type="match status" value="1"/>
</dbReference>
<dbReference type="Gene3D" id="3.40.50.11270">
    <property type="match status" value="1"/>
</dbReference>
<dbReference type="Gene3D" id="3.40.1010.20">
    <property type="entry name" value="4-hydroxy-3-methylbut-2-enyl diphosphate reductase, catalytic domain"/>
    <property type="match status" value="2"/>
</dbReference>
<dbReference type="HAMAP" id="MF_00191">
    <property type="entry name" value="IspH"/>
    <property type="match status" value="1"/>
</dbReference>
<dbReference type="InterPro" id="IPR003451">
    <property type="entry name" value="LytB/IspH"/>
</dbReference>
<dbReference type="NCBIfam" id="TIGR00216">
    <property type="entry name" value="ispH_lytB"/>
    <property type="match status" value="1"/>
</dbReference>
<dbReference type="NCBIfam" id="NF002188">
    <property type="entry name" value="PRK01045.1-2"/>
    <property type="match status" value="1"/>
</dbReference>
<dbReference type="NCBIfam" id="NF002190">
    <property type="entry name" value="PRK01045.1-4"/>
    <property type="match status" value="1"/>
</dbReference>
<dbReference type="PANTHER" id="PTHR30426">
    <property type="entry name" value="4-HYDROXY-3-METHYLBUT-2-ENYL DIPHOSPHATE REDUCTASE"/>
    <property type="match status" value="1"/>
</dbReference>
<dbReference type="PANTHER" id="PTHR30426:SF0">
    <property type="entry name" value="4-HYDROXY-3-METHYLBUT-2-ENYL DIPHOSPHATE REDUCTASE"/>
    <property type="match status" value="1"/>
</dbReference>
<dbReference type="Pfam" id="PF02401">
    <property type="entry name" value="LYTB"/>
    <property type="match status" value="1"/>
</dbReference>
<protein>
    <recommendedName>
        <fullName evidence="1">4-hydroxy-3-methylbut-2-enyl diphosphate reductase</fullName>
        <shortName evidence="1">HMBPP reductase</shortName>
        <ecNumber evidence="1">1.17.7.4</ecNumber>
    </recommendedName>
</protein>
<gene>
    <name evidence="1" type="primary">ispH</name>
    <name type="ordered locus">Pput_0647</name>
</gene>
<evidence type="ECO:0000255" key="1">
    <source>
        <dbReference type="HAMAP-Rule" id="MF_00191"/>
    </source>
</evidence>
<accession>A5VY55</accession>
<organism>
    <name type="scientific">Pseudomonas putida (strain ATCC 700007 / DSM 6899 / JCM 31910 / BCRC 17059 / LMG 24140 / F1)</name>
    <dbReference type="NCBI Taxonomy" id="351746"/>
    <lineage>
        <taxon>Bacteria</taxon>
        <taxon>Pseudomonadati</taxon>
        <taxon>Pseudomonadota</taxon>
        <taxon>Gammaproteobacteria</taxon>
        <taxon>Pseudomonadales</taxon>
        <taxon>Pseudomonadaceae</taxon>
        <taxon>Pseudomonas</taxon>
    </lineage>
</organism>
<comment type="function">
    <text evidence="1">Catalyzes the conversion of 1-hydroxy-2-methyl-2-(E)-butenyl 4-diphosphate (HMBPP) into a mixture of isopentenyl diphosphate (IPP) and dimethylallyl diphosphate (DMAPP). Acts in the terminal step of the DOXP/MEP pathway for isoprenoid precursor biosynthesis.</text>
</comment>
<comment type="catalytic activity">
    <reaction evidence="1">
        <text>isopentenyl diphosphate + 2 oxidized [2Fe-2S]-[ferredoxin] + H2O = (2E)-4-hydroxy-3-methylbut-2-enyl diphosphate + 2 reduced [2Fe-2S]-[ferredoxin] + 2 H(+)</text>
        <dbReference type="Rhea" id="RHEA:24488"/>
        <dbReference type="Rhea" id="RHEA-COMP:10000"/>
        <dbReference type="Rhea" id="RHEA-COMP:10001"/>
        <dbReference type="ChEBI" id="CHEBI:15377"/>
        <dbReference type="ChEBI" id="CHEBI:15378"/>
        <dbReference type="ChEBI" id="CHEBI:33737"/>
        <dbReference type="ChEBI" id="CHEBI:33738"/>
        <dbReference type="ChEBI" id="CHEBI:128753"/>
        <dbReference type="ChEBI" id="CHEBI:128769"/>
        <dbReference type="EC" id="1.17.7.4"/>
    </reaction>
</comment>
<comment type="catalytic activity">
    <reaction evidence="1">
        <text>dimethylallyl diphosphate + 2 oxidized [2Fe-2S]-[ferredoxin] + H2O = (2E)-4-hydroxy-3-methylbut-2-enyl diphosphate + 2 reduced [2Fe-2S]-[ferredoxin] + 2 H(+)</text>
        <dbReference type="Rhea" id="RHEA:24825"/>
        <dbReference type="Rhea" id="RHEA-COMP:10000"/>
        <dbReference type="Rhea" id="RHEA-COMP:10001"/>
        <dbReference type="ChEBI" id="CHEBI:15377"/>
        <dbReference type="ChEBI" id="CHEBI:15378"/>
        <dbReference type="ChEBI" id="CHEBI:33737"/>
        <dbReference type="ChEBI" id="CHEBI:33738"/>
        <dbReference type="ChEBI" id="CHEBI:57623"/>
        <dbReference type="ChEBI" id="CHEBI:128753"/>
        <dbReference type="EC" id="1.17.7.4"/>
    </reaction>
</comment>
<comment type="cofactor">
    <cofactor evidence="1">
        <name>[4Fe-4S] cluster</name>
        <dbReference type="ChEBI" id="CHEBI:49883"/>
    </cofactor>
    <text evidence="1">Binds 1 [4Fe-4S] cluster per subunit.</text>
</comment>
<comment type="pathway">
    <text evidence="1">Isoprenoid biosynthesis; dimethylallyl diphosphate biosynthesis; dimethylallyl diphosphate from (2E)-4-hydroxy-3-methylbutenyl diphosphate: step 1/1.</text>
</comment>
<comment type="pathway">
    <text evidence="1">Isoprenoid biosynthesis; isopentenyl diphosphate biosynthesis via DXP pathway; isopentenyl diphosphate from 1-deoxy-D-xylulose 5-phosphate: step 6/6.</text>
</comment>
<comment type="similarity">
    <text evidence="1">Belongs to the IspH family.</text>
</comment>
<reference key="1">
    <citation type="submission" date="2007-05" db="EMBL/GenBank/DDBJ databases">
        <title>Complete sequence of Pseudomonas putida F1.</title>
        <authorList>
            <consortium name="US DOE Joint Genome Institute"/>
            <person name="Copeland A."/>
            <person name="Lucas S."/>
            <person name="Lapidus A."/>
            <person name="Barry K."/>
            <person name="Detter J.C."/>
            <person name="Glavina del Rio T."/>
            <person name="Hammon N."/>
            <person name="Israni S."/>
            <person name="Dalin E."/>
            <person name="Tice H."/>
            <person name="Pitluck S."/>
            <person name="Chain P."/>
            <person name="Malfatti S."/>
            <person name="Shin M."/>
            <person name="Vergez L."/>
            <person name="Schmutz J."/>
            <person name="Larimer F."/>
            <person name="Land M."/>
            <person name="Hauser L."/>
            <person name="Kyrpides N."/>
            <person name="Lykidis A."/>
            <person name="Parales R."/>
            <person name="Richardson P."/>
        </authorList>
    </citation>
    <scope>NUCLEOTIDE SEQUENCE [LARGE SCALE GENOMIC DNA]</scope>
    <source>
        <strain>ATCC 700007 / DSM 6899 / JCM 31910 / BCRC 17059 / LMG 24140 / F1</strain>
    </source>
</reference>
<keyword id="KW-0004">4Fe-4S</keyword>
<keyword id="KW-0408">Iron</keyword>
<keyword id="KW-0411">Iron-sulfur</keyword>
<keyword id="KW-0414">Isoprene biosynthesis</keyword>
<keyword id="KW-0479">Metal-binding</keyword>
<keyword id="KW-0560">Oxidoreductase</keyword>
<sequence>MQIKLANPRGFCAGVDRAIEIVNRALEVFGPPIYVRHEVVHNKFVVEDLRNRGAIFVEELDQVPDDVIVIFSAHGVSQAVRQEAAGRGLKVFDATCPLVTKVHIEVAKYSRDGRECILIGHEGHPEVEGTMGQYDASNGGAIYLVEDEEDVANLQVRDPNHLAFVTQTTLSMDDTSRVIDALRARFPNIGGPRKDDICYATQNRQDAVKQLAGESDVVLVVGSPNSSNSNRLRELAERMGTPAYLIDGAEDMQRGWFDQTARIGITAGASAPEVLVRGVIEQLKAWGATGAEELDGREENITFSMPKELRVRSLI</sequence>